<dbReference type="EC" id="3.6.1.15" evidence="1"/>
<dbReference type="EMBL" id="CP000561">
    <property type="protein sequence ID" value="ABO09177.1"/>
    <property type="molecule type" value="Genomic_DNA"/>
</dbReference>
<dbReference type="RefSeq" id="WP_011850436.1">
    <property type="nucleotide sequence ID" value="NC_009073.1"/>
</dbReference>
<dbReference type="SMR" id="A3MX10"/>
<dbReference type="STRING" id="410359.Pcal_1760"/>
<dbReference type="GeneID" id="4909216"/>
<dbReference type="KEGG" id="pcl:Pcal_1760"/>
<dbReference type="eggNOG" id="arCOG01034">
    <property type="taxonomic scope" value="Archaea"/>
</dbReference>
<dbReference type="HOGENOM" id="CLU_103145_1_1_2"/>
<dbReference type="OrthoDB" id="52698at2157"/>
<dbReference type="Proteomes" id="UP000001431">
    <property type="component" value="Chromosome"/>
</dbReference>
<dbReference type="GO" id="GO:0005524">
    <property type="term" value="F:ATP binding"/>
    <property type="evidence" value="ECO:0007669"/>
    <property type="project" value="UniProtKB-UniRule"/>
</dbReference>
<dbReference type="GO" id="GO:0016887">
    <property type="term" value="F:ATP hydrolysis activity"/>
    <property type="evidence" value="ECO:0007669"/>
    <property type="project" value="InterPro"/>
</dbReference>
<dbReference type="CDD" id="cd19482">
    <property type="entry name" value="RecA-like_Thep1"/>
    <property type="match status" value="1"/>
</dbReference>
<dbReference type="Gene3D" id="3.40.50.300">
    <property type="entry name" value="P-loop containing nucleotide triphosphate hydrolases"/>
    <property type="match status" value="1"/>
</dbReference>
<dbReference type="HAMAP" id="MF_00796">
    <property type="entry name" value="NTPase_1"/>
    <property type="match status" value="1"/>
</dbReference>
<dbReference type="InterPro" id="IPR003593">
    <property type="entry name" value="AAA+_ATPase"/>
</dbReference>
<dbReference type="InterPro" id="IPR004948">
    <property type="entry name" value="Nuc-triphosphatase_THEP1"/>
</dbReference>
<dbReference type="InterPro" id="IPR027417">
    <property type="entry name" value="P-loop_NTPase"/>
</dbReference>
<dbReference type="NCBIfam" id="NF010248">
    <property type="entry name" value="PRK13695.1"/>
    <property type="match status" value="1"/>
</dbReference>
<dbReference type="PANTHER" id="PTHR43146">
    <property type="entry name" value="CANCER-RELATED NUCLEOSIDE-TRIPHOSPHATASE"/>
    <property type="match status" value="1"/>
</dbReference>
<dbReference type="PANTHER" id="PTHR43146:SF1">
    <property type="entry name" value="CANCER-RELATED NUCLEOSIDE-TRIPHOSPHATASE"/>
    <property type="match status" value="1"/>
</dbReference>
<dbReference type="Pfam" id="PF03266">
    <property type="entry name" value="NTPase_1"/>
    <property type="match status" value="1"/>
</dbReference>
<dbReference type="SMART" id="SM00382">
    <property type="entry name" value="AAA"/>
    <property type="match status" value="1"/>
</dbReference>
<dbReference type="SUPFAM" id="SSF52540">
    <property type="entry name" value="P-loop containing nucleoside triphosphate hydrolases"/>
    <property type="match status" value="1"/>
</dbReference>
<proteinExistence type="inferred from homology"/>
<comment type="function">
    <text evidence="1">Has nucleotide phosphatase activity towards ATP, GTP, CTP, TTP and UTP. May hydrolyze nucleoside diphosphates with lower efficiency.</text>
</comment>
<comment type="catalytic activity">
    <reaction evidence="1">
        <text>a ribonucleoside 5'-triphosphate + H2O = a ribonucleoside 5'-diphosphate + phosphate + H(+)</text>
        <dbReference type="Rhea" id="RHEA:23680"/>
        <dbReference type="ChEBI" id="CHEBI:15377"/>
        <dbReference type="ChEBI" id="CHEBI:15378"/>
        <dbReference type="ChEBI" id="CHEBI:43474"/>
        <dbReference type="ChEBI" id="CHEBI:57930"/>
        <dbReference type="ChEBI" id="CHEBI:61557"/>
        <dbReference type="EC" id="3.6.1.15"/>
    </reaction>
</comment>
<comment type="similarity">
    <text evidence="1">Belongs to the THEP1 NTPase family.</text>
</comment>
<sequence>MTWRERAEKLLIGISGMPGVGKTTLVLRVLELARSKYRCCGFVTVEVRERGVRIGFDTIDVVSGARVPLARVGTGSPSVGKYVVNLPSCEVISRALRQEDCEVAFIDEIGAMEFKCPTFYTDLRVAVDRIPRIIATVHRNYIHTAEKLGFEIIWLTRENWNSTLSTVLKALSLST</sequence>
<evidence type="ECO:0000255" key="1">
    <source>
        <dbReference type="HAMAP-Rule" id="MF_00796"/>
    </source>
</evidence>
<reference key="1">
    <citation type="submission" date="2007-02" db="EMBL/GenBank/DDBJ databases">
        <title>Complete sequence of Pyrobaculum calidifontis JCM 11548.</title>
        <authorList>
            <consortium name="US DOE Joint Genome Institute"/>
            <person name="Copeland A."/>
            <person name="Lucas S."/>
            <person name="Lapidus A."/>
            <person name="Barry K."/>
            <person name="Glavina del Rio T."/>
            <person name="Dalin E."/>
            <person name="Tice H."/>
            <person name="Pitluck S."/>
            <person name="Chain P."/>
            <person name="Malfatti S."/>
            <person name="Shin M."/>
            <person name="Vergez L."/>
            <person name="Schmutz J."/>
            <person name="Larimer F."/>
            <person name="Land M."/>
            <person name="Hauser L."/>
            <person name="Kyrpides N."/>
            <person name="Mikhailova N."/>
            <person name="Cozen A.E."/>
            <person name="Fitz-Gibbon S.T."/>
            <person name="House C.H."/>
            <person name="Saltikov C."/>
            <person name="Lowe T.M."/>
            <person name="Richardson P."/>
        </authorList>
    </citation>
    <scope>NUCLEOTIDE SEQUENCE [LARGE SCALE GENOMIC DNA]</scope>
    <source>
        <strain>DSM 21063 / JCM 11548 / VA1</strain>
    </source>
</reference>
<accession>A3MX10</accession>
<organism>
    <name type="scientific">Pyrobaculum calidifontis (strain DSM 21063 / JCM 11548 / VA1)</name>
    <dbReference type="NCBI Taxonomy" id="410359"/>
    <lineage>
        <taxon>Archaea</taxon>
        <taxon>Thermoproteota</taxon>
        <taxon>Thermoprotei</taxon>
        <taxon>Thermoproteales</taxon>
        <taxon>Thermoproteaceae</taxon>
        <taxon>Pyrobaculum</taxon>
    </lineage>
</organism>
<name>NTPTH_PYRCJ</name>
<keyword id="KW-0067">ATP-binding</keyword>
<keyword id="KW-0378">Hydrolase</keyword>
<keyword id="KW-0547">Nucleotide-binding</keyword>
<gene>
    <name type="ordered locus">Pcal_1760</name>
</gene>
<protein>
    <recommendedName>
        <fullName evidence="1">Nucleoside-triphosphatase THEP1</fullName>
        <shortName evidence="1">NTPase THEP1</shortName>
        <ecNumber evidence="1">3.6.1.15</ecNumber>
    </recommendedName>
    <alternativeName>
        <fullName evidence="1">Nucleoside triphosphate phosphohydrolase</fullName>
    </alternativeName>
</protein>
<feature type="chain" id="PRO_0000360026" description="Nucleoside-triphosphatase THEP1">
    <location>
        <begin position="1"/>
        <end position="175"/>
    </location>
</feature>
<feature type="binding site" evidence="1">
    <location>
        <begin position="16"/>
        <end position="23"/>
    </location>
    <ligand>
        <name>ATP</name>
        <dbReference type="ChEBI" id="CHEBI:30616"/>
    </ligand>
</feature>
<feature type="binding site" evidence="1">
    <location>
        <begin position="103"/>
        <end position="110"/>
    </location>
    <ligand>
        <name>ATP</name>
        <dbReference type="ChEBI" id="CHEBI:30616"/>
    </ligand>
</feature>